<sequence>MVLDSGTQVYEQAPPRPPAGSPSQHHKLKPSNGNGPPLYPWPESLGMPLALAVPSALQQQTMWQTFSKLHLEQSSHMRRSESTYSVNSTGRRGRGKAPIGRGCDPGGTLRPAASLPHIAKIRKDVGSSSSKSPCMLVALRPTNMDQEREKFFQSHYTYNPQFEYQEPMPMSVLEKYQEASAQFMNQAVGIIEAVLEKFGTYENFEAATGGQLLTKCQIWSTVRKYMQKEGCVGEIVVQLSEDLLSQAVMMVENSRPTLAINLTGARQYWLEGMLRHEIGTHYLRGVNNSRQPWHSTEGRLQYGLQPANPTEEGLASLHSVLFRKQPFLWRAALLYYTIHQAAHMSFRQLFQDLAQYVQDEGVRWEYCVRAKRGQTDTSQPGCFSKDQVYLDGILRILRHRHTIDFQLLTSLGKVSYEDVEQLRPYGVLDNTRVPHFMKDLERYRQQLEHIMTTNRLDEAELGRLLPD</sequence>
<accession>Q810A5</accession>
<accession>Q9D4J6</accession>
<organism>
    <name type="scientific">Mus musculus</name>
    <name type="common">Mouse</name>
    <dbReference type="NCBI Taxonomy" id="10090"/>
    <lineage>
        <taxon>Eukaryota</taxon>
        <taxon>Metazoa</taxon>
        <taxon>Chordata</taxon>
        <taxon>Craniata</taxon>
        <taxon>Vertebrata</taxon>
        <taxon>Euteleostomi</taxon>
        <taxon>Mammalia</taxon>
        <taxon>Eutheria</taxon>
        <taxon>Euarchontoglires</taxon>
        <taxon>Glires</taxon>
        <taxon>Rodentia</taxon>
        <taxon>Myomorpha</taxon>
        <taxon>Muroidea</taxon>
        <taxon>Muridae</taxon>
        <taxon>Murinae</taxon>
        <taxon>Mus</taxon>
        <taxon>Mus</taxon>
    </lineage>
</organism>
<reference key="1">
    <citation type="journal article" date="2005" name="Science">
        <title>The transcriptional landscape of the mammalian genome.</title>
        <authorList>
            <person name="Carninci P."/>
            <person name="Kasukawa T."/>
            <person name="Katayama S."/>
            <person name="Gough J."/>
            <person name="Frith M.C."/>
            <person name="Maeda N."/>
            <person name="Oyama R."/>
            <person name="Ravasi T."/>
            <person name="Lenhard B."/>
            <person name="Wells C."/>
            <person name="Kodzius R."/>
            <person name="Shimokawa K."/>
            <person name="Bajic V.B."/>
            <person name="Brenner S.E."/>
            <person name="Batalov S."/>
            <person name="Forrest A.R."/>
            <person name="Zavolan M."/>
            <person name="Davis M.J."/>
            <person name="Wilming L.G."/>
            <person name="Aidinis V."/>
            <person name="Allen J.E."/>
            <person name="Ambesi-Impiombato A."/>
            <person name="Apweiler R."/>
            <person name="Aturaliya R.N."/>
            <person name="Bailey T.L."/>
            <person name="Bansal M."/>
            <person name="Baxter L."/>
            <person name="Beisel K.W."/>
            <person name="Bersano T."/>
            <person name="Bono H."/>
            <person name="Chalk A.M."/>
            <person name="Chiu K.P."/>
            <person name="Choudhary V."/>
            <person name="Christoffels A."/>
            <person name="Clutterbuck D.R."/>
            <person name="Crowe M.L."/>
            <person name="Dalla E."/>
            <person name="Dalrymple B.P."/>
            <person name="de Bono B."/>
            <person name="Della Gatta G."/>
            <person name="di Bernardo D."/>
            <person name="Down T."/>
            <person name="Engstrom P."/>
            <person name="Fagiolini M."/>
            <person name="Faulkner G."/>
            <person name="Fletcher C.F."/>
            <person name="Fukushima T."/>
            <person name="Furuno M."/>
            <person name="Futaki S."/>
            <person name="Gariboldi M."/>
            <person name="Georgii-Hemming P."/>
            <person name="Gingeras T.R."/>
            <person name="Gojobori T."/>
            <person name="Green R.E."/>
            <person name="Gustincich S."/>
            <person name="Harbers M."/>
            <person name="Hayashi Y."/>
            <person name="Hensch T.K."/>
            <person name="Hirokawa N."/>
            <person name="Hill D."/>
            <person name="Huminiecki L."/>
            <person name="Iacono M."/>
            <person name="Ikeo K."/>
            <person name="Iwama A."/>
            <person name="Ishikawa T."/>
            <person name="Jakt M."/>
            <person name="Kanapin A."/>
            <person name="Katoh M."/>
            <person name="Kawasawa Y."/>
            <person name="Kelso J."/>
            <person name="Kitamura H."/>
            <person name="Kitano H."/>
            <person name="Kollias G."/>
            <person name="Krishnan S.P."/>
            <person name="Kruger A."/>
            <person name="Kummerfeld S.K."/>
            <person name="Kurochkin I.V."/>
            <person name="Lareau L.F."/>
            <person name="Lazarevic D."/>
            <person name="Lipovich L."/>
            <person name="Liu J."/>
            <person name="Liuni S."/>
            <person name="McWilliam S."/>
            <person name="Madan Babu M."/>
            <person name="Madera M."/>
            <person name="Marchionni L."/>
            <person name="Matsuda H."/>
            <person name="Matsuzawa S."/>
            <person name="Miki H."/>
            <person name="Mignone F."/>
            <person name="Miyake S."/>
            <person name="Morris K."/>
            <person name="Mottagui-Tabar S."/>
            <person name="Mulder N."/>
            <person name="Nakano N."/>
            <person name="Nakauchi H."/>
            <person name="Ng P."/>
            <person name="Nilsson R."/>
            <person name="Nishiguchi S."/>
            <person name="Nishikawa S."/>
            <person name="Nori F."/>
            <person name="Ohara O."/>
            <person name="Okazaki Y."/>
            <person name="Orlando V."/>
            <person name="Pang K.C."/>
            <person name="Pavan W.J."/>
            <person name="Pavesi G."/>
            <person name="Pesole G."/>
            <person name="Petrovsky N."/>
            <person name="Piazza S."/>
            <person name="Reed J."/>
            <person name="Reid J.F."/>
            <person name="Ring B.Z."/>
            <person name="Ringwald M."/>
            <person name="Rost B."/>
            <person name="Ruan Y."/>
            <person name="Salzberg S.L."/>
            <person name="Sandelin A."/>
            <person name="Schneider C."/>
            <person name="Schoenbach C."/>
            <person name="Sekiguchi K."/>
            <person name="Semple C.A."/>
            <person name="Seno S."/>
            <person name="Sessa L."/>
            <person name="Sheng Y."/>
            <person name="Shibata Y."/>
            <person name="Shimada H."/>
            <person name="Shimada K."/>
            <person name="Silva D."/>
            <person name="Sinclair B."/>
            <person name="Sperling S."/>
            <person name="Stupka E."/>
            <person name="Sugiura K."/>
            <person name="Sultana R."/>
            <person name="Takenaka Y."/>
            <person name="Taki K."/>
            <person name="Tammoja K."/>
            <person name="Tan S.L."/>
            <person name="Tang S."/>
            <person name="Taylor M.S."/>
            <person name="Tegner J."/>
            <person name="Teichmann S.A."/>
            <person name="Ueda H.R."/>
            <person name="van Nimwegen E."/>
            <person name="Verardo R."/>
            <person name="Wei C.L."/>
            <person name="Yagi K."/>
            <person name="Yamanishi H."/>
            <person name="Zabarovsky E."/>
            <person name="Zhu S."/>
            <person name="Zimmer A."/>
            <person name="Hide W."/>
            <person name="Bult C."/>
            <person name="Grimmond S.M."/>
            <person name="Teasdale R.D."/>
            <person name="Liu E.T."/>
            <person name="Brusic V."/>
            <person name="Quackenbush J."/>
            <person name="Wahlestedt C."/>
            <person name="Mattick J.S."/>
            <person name="Hume D.A."/>
            <person name="Kai C."/>
            <person name="Sasaki D."/>
            <person name="Tomaru Y."/>
            <person name="Fukuda S."/>
            <person name="Kanamori-Katayama M."/>
            <person name="Suzuki M."/>
            <person name="Aoki J."/>
            <person name="Arakawa T."/>
            <person name="Iida J."/>
            <person name="Imamura K."/>
            <person name="Itoh M."/>
            <person name="Kato T."/>
            <person name="Kawaji H."/>
            <person name="Kawagashira N."/>
            <person name="Kawashima T."/>
            <person name="Kojima M."/>
            <person name="Kondo S."/>
            <person name="Konno H."/>
            <person name="Nakano K."/>
            <person name="Ninomiya N."/>
            <person name="Nishio T."/>
            <person name="Okada M."/>
            <person name="Plessy C."/>
            <person name="Shibata K."/>
            <person name="Shiraki T."/>
            <person name="Suzuki S."/>
            <person name="Tagami M."/>
            <person name="Waki K."/>
            <person name="Watahiki A."/>
            <person name="Okamura-Oho Y."/>
            <person name="Suzuki H."/>
            <person name="Kawai J."/>
            <person name="Hayashizaki Y."/>
        </authorList>
    </citation>
    <scope>NUCLEOTIDE SEQUENCE [LARGE SCALE MRNA]</scope>
    <source>
        <strain>C57BL/6J</strain>
        <tissue>Diencephalon</tissue>
        <tissue>Testis</tissue>
    </source>
</reference>
<reference key="2">
    <citation type="journal article" date="2004" name="Genome Res.">
        <title>The status, quality, and expansion of the NIH full-length cDNA project: the Mammalian Gene Collection (MGC).</title>
        <authorList>
            <consortium name="The MGC Project Team"/>
        </authorList>
    </citation>
    <scope>NUCLEOTIDE SEQUENCE [LARGE SCALE MRNA]</scope>
    <source>
        <strain>C57BL/6J</strain>
        <tissue>Brain</tissue>
    </source>
</reference>
<reference key="3">
    <citation type="journal article" date="2022" name="Science">
        <title>Posttranslational modification of microtubules by the MATCAP detyrosinase.</title>
        <authorList>
            <person name="Landskron L."/>
            <person name="Bak J."/>
            <person name="Adamopoulos A."/>
            <person name="Kaplani K."/>
            <person name="Moraiti M."/>
            <person name="van den Hengel L.G."/>
            <person name="Song J.Y."/>
            <person name="Bleijerveld O.B."/>
            <person name="Nieuwenhuis J."/>
            <person name="Heidebrecht T."/>
            <person name="Henneman L."/>
            <person name="Moutin M.J."/>
            <person name="Barisic M."/>
            <person name="Taraviras S."/>
            <person name="Perrakis A."/>
            <person name="Brummelkamp T.R."/>
        </authorList>
    </citation>
    <scope>FUNCTION</scope>
    <scope>DISRUPTION PHENOTYPE</scope>
</reference>
<proteinExistence type="evidence at transcript level"/>
<protein>
    <recommendedName>
        <fullName evidence="6">Microtubule-associated tyrosine carboxypeptidase 1</fullName>
        <ecNumber evidence="1">3.4.17.17</ecNumber>
    </recommendedName>
</protein>
<evidence type="ECO:0000250" key="1">
    <source>
        <dbReference type="UniProtKB" id="Q68EN5"/>
    </source>
</evidence>
<evidence type="ECO:0000256" key="2">
    <source>
        <dbReference type="SAM" id="MobiDB-lite"/>
    </source>
</evidence>
<evidence type="ECO:0000269" key="3">
    <source>
    </source>
</evidence>
<evidence type="ECO:0000303" key="4">
    <source>
    </source>
</evidence>
<evidence type="ECO:0000305" key="5"/>
<evidence type="ECO:0000312" key="6">
    <source>
        <dbReference type="MGI" id="MGI:1921606"/>
    </source>
</evidence>
<feature type="chain" id="PRO_0000320620" description="Microtubule-associated tyrosine carboxypeptidase 1">
    <location>
        <begin position="1"/>
        <end position="467"/>
    </location>
</feature>
<feature type="region of interest" description="Disordered" evidence="2">
    <location>
        <begin position="1"/>
        <end position="40"/>
    </location>
</feature>
<feature type="region of interest" description="Disordered" evidence="2">
    <location>
        <begin position="77"/>
        <end position="111"/>
    </location>
</feature>
<feature type="compositionally biased region" description="Polar residues" evidence="2">
    <location>
        <begin position="1"/>
        <end position="10"/>
    </location>
</feature>
<feature type="active site" description="Nucleophile" evidence="1">
    <location>
        <position position="277"/>
    </location>
</feature>
<feature type="binding site" evidence="1">
    <location>
        <position position="276"/>
    </location>
    <ligand>
        <name>Zn(2+)</name>
        <dbReference type="ChEBI" id="CHEBI:29105"/>
        <note>catalytic</note>
    </ligand>
</feature>
<feature type="binding site" evidence="1">
    <location>
        <position position="281"/>
    </location>
    <ligand>
        <name>Zn(2+)</name>
        <dbReference type="ChEBI" id="CHEBI:29105"/>
        <note>catalytic</note>
    </ligand>
</feature>
<feature type="binding site" evidence="1">
    <location>
        <position position="312"/>
    </location>
    <ligand>
        <name>Zn(2+)</name>
        <dbReference type="ChEBI" id="CHEBI:29105"/>
        <note>catalytic</note>
    </ligand>
</feature>
<feature type="sequence conflict" description="In Ref. 1; BAB30261." evidence="5" ref="1">
    <original>L</original>
    <variation>S</variation>
    <location>
        <position position="397"/>
    </location>
</feature>
<feature type="sequence conflict" description="In Ref. 1; BAB30261." evidence="5" ref="1">
    <original>K</original>
    <variation>R</variation>
    <location>
        <position position="438"/>
    </location>
</feature>
<comment type="function">
    <text evidence="1 3">Tyrosine carboxypeptidase that removes the C-terminal tyrosine residue of alpha-tubulin, thereby regulating microtubule dynamics and function (PubMed:35482892). Also able to remove the C-terminal phenylalanine residue of alpha-tubulin TUBA8. Recognizes adjacent tubulin dimers along the same protofilament (By similarity).</text>
</comment>
<comment type="catalytic activity">
    <reaction evidence="1">
        <text>C-terminal L-alpha-aminoacyl-L-glutamyl-L-glutamyl-L-tyrosyl-[tubulin] + H2O = C-terminal L-alpha-aminoacyl-L-glutamyl-L-glutamyl-[tubulin] + L-tyrosine</text>
        <dbReference type="Rhea" id="RHEA:57444"/>
        <dbReference type="Rhea" id="RHEA-COMP:16434"/>
        <dbReference type="Rhea" id="RHEA-COMP:16435"/>
        <dbReference type="ChEBI" id="CHEBI:15377"/>
        <dbReference type="ChEBI" id="CHEBI:58315"/>
        <dbReference type="ChEBI" id="CHEBI:149554"/>
        <dbReference type="ChEBI" id="CHEBI:149555"/>
        <dbReference type="EC" id="3.4.17.17"/>
    </reaction>
    <physiologicalReaction direction="left-to-right" evidence="1">
        <dbReference type="Rhea" id="RHEA:57445"/>
    </physiologicalReaction>
</comment>
<comment type="catalytic activity">
    <reaction evidence="1">
        <text>C-terminal L-alpha-aminoacyl-L-glutamyl-L-glutamyl-L-phenylalanyl-[tubulin] + H2O = C-terminal L-alpha-aminoacyl-L-glutamyl-L-glutamyl-[tubulin] + L-phenylalanine</text>
        <dbReference type="Rhea" id="RHEA:72663"/>
        <dbReference type="Rhea" id="RHEA-COMP:16435"/>
        <dbReference type="Rhea" id="RHEA-COMP:18133"/>
        <dbReference type="ChEBI" id="CHEBI:15377"/>
        <dbReference type="ChEBI" id="CHEBI:58095"/>
        <dbReference type="ChEBI" id="CHEBI:149555"/>
        <dbReference type="ChEBI" id="CHEBI:192362"/>
    </reaction>
    <physiologicalReaction direction="left-to-right" evidence="1">
        <dbReference type="Rhea" id="RHEA:72664"/>
    </physiologicalReaction>
</comment>
<comment type="cofactor">
    <cofactor evidence="1">
        <name>Zn(2+)</name>
        <dbReference type="ChEBI" id="CHEBI:29105"/>
    </cofactor>
    <text evidence="1">Binds 1 zinc ion per subunit.</text>
</comment>
<comment type="subcellular location">
    <subcellularLocation>
        <location evidence="1">Cytoplasm</location>
        <location evidence="1">Cytoskeleton</location>
    </subcellularLocation>
    <text evidence="1">Associates with microtubules.</text>
</comment>
<comment type="domain">
    <text evidence="1">Metalloprotease with an atypical HExxxH zinc-binding motif instead of HExxH, which interrupts the active site-containing helix without affecting the integrity of the catalytic site arrangement.</text>
</comment>
<comment type="domain">
    <text evidence="1">The N-terminal disordered region enhances its anchoring on microtubules, while dampening processivity on the polymerized substrate.</text>
</comment>
<comment type="disruption phenotype">
    <text evidence="3">No visible phenotype: mice are viable and fertile and display no gross alterations (PubMed:35482892). Mice lacking both Matcap1 and Svbp are viable but show a reduction in brain volume: microcephaly is associated with proliferative defects during neurogenesis and abnormal behavior (PubMed:35482892). Cells lacking both Matcap1 and Svbp show abolished tubulin detyrosination (PubMed:35482892).</text>
</comment>
<comment type="similarity">
    <text evidence="5">Belongs to the peptidase MATCAP family.</text>
</comment>
<gene>
    <name evidence="6" type="primary">Matcap1</name>
    <name evidence="4" type="synonym">Matcap</name>
</gene>
<dbReference type="EC" id="3.4.17.17" evidence="1"/>
<dbReference type="EMBL" id="AK016481">
    <property type="protein sequence ID" value="BAB30261.1"/>
    <property type="molecule type" value="mRNA"/>
</dbReference>
<dbReference type="EMBL" id="AK136929">
    <property type="protein sequence ID" value="BAE23173.1"/>
    <property type="molecule type" value="mRNA"/>
</dbReference>
<dbReference type="EMBL" id="BC043046">
    <property type="protein sequence ID" value="AAH43046.1"/>
    <property type="molecule type" value="mRNA"/>
</dbReference>
<dbReference type="EMBL" id="BC059045">
    <property type="protein sequence ID" value="AAH59045.1"/>
    <property type="molecule type" value="mRNA"/>
</dbReference>
<dbReference type="CCDS" id="CCDS22596.1"/>
<dbReference type="RefSeq" id="NP_001159866.1">
    <property type="nucleotide sequence ID" value="NM_001166394.1"/>
</dbReference>
<dbReference type="RefSeq" id="NP_083164.1">
    <property type="nucleotide sequence ID" value="NM_028888.2"/>
</dbReference>
<dbReference type="RefSeq" id="XP_006531496.1">
    <property type="nucleotide sequence ID" value="XM_006531433.4"/>
</dbReference>
<dbReference type="SMR" id="Q810A5"/>
<dbReference type="BioGRID" id="216687">
    <property type="interactions" value="1"/>
</dbReference>
<dbReference type="FunCoup" id="Q810A5">
    <property type="interactions" value="82"/>
</dbReference>
<dbReference type="iPTMnet" id="Q810A5"/>
<dbReference type="PhosphoSitePlus" id="Q810A5"/>
<dbReference type="PaxDb" id="10090-ENSMUSP00000128530"/>
<dbReference type="ProteomicsDB" id="268949"/>
<dbReference type="Antibodypedia" id="68169">
    <property type="antibodies" value="15 antibodies from 7 providers"/>
</dbReference>
<dbReference type="DNASU" id="74356"/>
<dbReference type="Ensembl" id="ENSMUST00000014981.8">
    <property type="protein sequence ID" value="ENSMUSP00000014981.7"/>
    <property type="gene ID" value="ENSMUSG00000014837.16"/>
</dbReference>
<dbReference type="Ensembl" id="ENSMUST00000171788.8">
    <property type="protein sequence ID" value="ENSMUSP00000128530.2"/>
    <property type="gene ID" value="ENSMUSG00000014837.16"/>
</dbReference>
<dbReference type="Ensembl" id="ENSMUST00000212219.2">
    <property type="protein sequence ID" value="ENSMUSP00000148836.2"/>
    <property type="gene ID" value="ENSMUSG00000014837.16"/>
</dbReference>
<dbReference type="Ensembl" id="ENSMUST00000212922.2">
    <property type="protein sequence ID" value="ENSMUSP00000148562.2"/>
    <property type="gene ID" value="ENSMUSG00000014837.16"/>
</dbReference>
<dbReference type="GeneID" id="74356"/>
<dbReference type="KEGG" id="mmu:74356"/>
<dbReference type="UCSC" id="uc009nce.2">
    <property type="organism name" value="mouse"/>
</dbReference>
<dbReference type="AGR" id="MGI:1921606"/>
<dbReference type="CTD" id="653319"/>
<dbReference type="MGI" id="MGI:1921606">
    <property type="gene designation" value="Matcap1"/>
</dbReference>
<dbReference type="VEuPathDB" id="HostDB:ENSMUSG00000014837"/>
<dbReference type="eggNOG" id="ENOG502QQGI">
    <property type="taxonomic scope" value="Eukaryota"/>
</dbReference>
<dbReference type="GeneTree" id="ENSGT00390000004417"/>
<dbReference type="HOGENOM" id="CLU_038689_2_0_1"/>
<dbReference type="InParanoid" id="Q810A5"/>
<dbReference type="OMA" id="RILQPPW"/>
<dbReference type="OrthoDB" id="449345at2759"/>
<dbReference type="PhylomeDB" id="Q810A5"/>
<dbReference type="TreeFam" id="TF329621"/>
<dbReference type="BioGRID-ORCS" id="74356">
    <property type="hits" value="1 hit in 78 CRISPR screens"/>
</dbReference>
<dbReference type="ChiTaRS" id="4931428F04Rik">
    <property type="organism name" value="mouse"/>
</dbReference>
<dbReference type="PRO" id="PR:Q810A5"/>
<dbReference type="Proteomes" id="UP000000589">
    <property type="component" value="Chromosome 8"/>
</dbReference>
<dbReference type="RNAct" id="Q810A5">
    <property type="molecule type" value="protein"/>
</dbReference>
<dbReference type="Bgee" id="ENSMUSG00000014837">
    <property type="expression patterns" value="Expressed in embryonic brain and 185 other cell types or tissues"/>
</dbReference>
<dbReference type="GO" id="GO:0005737">
    <property type="term" value="C:cytoplasm"/>
    <property type="evidence" value="ECO:0007669"/>
    <property type="project" value="UniProtKB-KW"/>
</dbReference>
<dbReference type="GO" id="GO:0005874">
    <property type="term" value="C:microtubule"/>
    <property type="evidence" value="ECO:0000250"/>
    <property type="project" value="UniProtKB"/>
</dbReference>
<dbReference type="GO" id="GO:0046872">
    <property type="term" value="F:metal ion binding"/>
    <property type="evidence" value="ECO:0007669"/>
    <property type="project" value="UniProtKB-KW"/>
</dbReference>
<dbReference type="GO" id="GO:0004181">
    <property type="term" value="F:metallocarboxypeptidase activity"/>
    <property type="evidence" value="ECO:0000250"/>
    <property type="project" value="UniProtKB"/>
</dbReference>
<dbReference type="GO" id="GO:0106423">
    <property type="term" value="F:tubulin-tyrosine carboxypeptidase"/>
    <property type="evidence" value="ECO:0000250"/>
    <property type="project" value="UniProtKB"/>
</dbReference>
<dbReference type="GO" id="GO:0007420">
    <property type="term" value="P:brain development"/>
    <property type="evidence" value="ECO:0000315"/>
    <property type="project" value="UniProtKB"/>
</dbReference>
<dbReference type="GO" id="GO:0006508">
    <property type="term" value="P:proteolysis"/>
    <property type="evidence" value="ECO:0007669"/>
    <property type="project" value="UniProtKB-KW"/>
</dbReference>
<dbReference type="InterPro" id="IPR012548">
    <property type="entry name" value="MATCAP"/>
</dbReference>
<dbReference type="PANTHER" id="PTHR31817">
    <property type="match status" value="1"/>
</dbReference>
<dbReference type="PANTHER" id="PTHR31817:SF1">
    <property type="entry name" value="MICROTUBULE-ASSOCIATED TYROSINE CARBOXYPEPTIDASE 1"/>
    <property type="match status" value="1"/>
</dbReference>
<dbReference type="Pfam" id="PF08014">
    <property type="entry name" value="MATCAP"/>
    <property type="match status" value="1"/>
</dbReference>
<dbReference type="SMART" id="SM01154">
    <property type="entry name" value="DUF1704"/>
    <property type="match status" value="1"/>
</dbReference>
<keyword id="KW-0121">Carboxypeptidase</keyword>
<keyword id="KW-0963">Cytoplasm</keyword>
<keyword id="KW-0206">Cytoskeleton</keyword>
<keyword id="KW-0378">Hydrolase</keyword>
<keyword id="KW-0479">Metal-binding</keyword>
<keyword id="KW-0482">Metalloprotease</keyword>
<keyword id="KW-0645">Protease</keyword>
<keyword id="KW-1185">Reference proteome</keyword>
<keyword id="KW-0862">Zinc</keyword>
<name>MACA1_MOUSE</name>